<proteinExistence type="inferred from homology"/>
<keyword id="KW-0119">Carbohydrate metabolism</keyword>
<keyword id="KW-0321">Glycogen metabolism</keyword>
<keyword id="KW-0326">Glycosidase</keyword>
<keyword id="KW-0378">Hydrolase</keyword>
<keyword id="KW-1185">Reference proteome</keyword>
<feature type="chain" id="PRO_0000054302" description="Glycogen debranching enzyme">
    <location>
        <begin position="1"/>
        <end position="658"/>
    </location>
</feature>
<feature type="region of interest" description="Disordered" evidence="2">
    <location>
        <begin position="459"/>
        <end position="484"/>
    </location>
</feature>
<feature type="active site" description="Nucleophile" evidence="1">
    <location>
        <position position="336"/>
    </location>
</feature>
<feature type="active site" description="Proton donor" evidence="1">
    <location>
        <position position="371"/>
    </location>
</feature>
<feature type="site" description="Transition state stabilizer" evidence="1">
    <location>
        <position position="443"/>
    </location>
</feature>
<evidence type="ECO:0000255" key="1">
    <source>
        <dbReference type="HAMAP-Rule" id="MF_01248"/>
    </source>
</evidence>
<evidence type="ECO:0000256" key="2">
    <source>
        <dbReference type="SAM" id="MobiDB-lite"/>
    </source>
</evidence>
<name>GLGX_SALTY</name>
<gene>
    <name evidence="1" type="primary">glgX</name>
    <name type="ordered locus">STM3537</name>
</gene>
<protein>
    <recommendedName>
        <fullName evidence="1">Glycogen debranching enzyme</fullName>
        <ecNumber evidence="1">3.2.1.196</ecNumber>
    </recommendedName>
    <alternativeName>
        <fullName evidence="1">Limit dextrin alpha-1,6-maltotetraose-hydrolase</fullName>
    </alternativeName>
</protein>
<organism>
    <name type="scientific">Salmonella typhimurium (strain LT2 / SGSC1412 / ATCC 700720)</name>
    <dbReference type="NCBI Taxonomy" id="99287"/>
    <lineage>
        <taxon>Bacteria</taxon>
        <taxon>Pseudomonadati</taxon>
        <taxon>Pseudomonadota</taxon>
        <taxon>Gammaproteobacteria</taxon>
        <taxon>Enterobacterales</taxon>
        <taxon>Enterobacteriaceae</taxon>
        <taxon>Salmonella</taxon>
    </lineage>
</organism>
<accession>Q8ZLG6</accession>
<reference key="1">
    <citation type="journal article" date="2001" name="Nature">
        <title>Complete genome sequence of Salmonella enterica serovar Typhimurium LT2.</title>
        <authorList>
            <person name="McClelland M."/>
            <person name="Sanderson K.E."/>
            <person name="Spieth J."/>
            <person name="Clifton S.W."/>
            <person name="Latreille P."/>
            <person name="Courtney L."/>
            <person name="Porwollik S."/>
            <person name="Ali J."/>
            <person name="Dante M."/>
            <person name="Du F."/>
            <person name="Hou S."/>
            <person name="Layman D."/>
            <person name="Leonard S."/>
            <person name="Nguyen C."/>
            <person name="Scott K."/>
            <person name="Holmes A."/>
            <person name="Grewal N."/>
            <person name="Mulvaney E."/>
            <person name="Ryan E."/>
            <person name="Sun H."/>
            <person name="Florea L."/>
            <person name="Miller W."/>
            <person name="Stoneking T."/>
            <person name="Nhan M."/>
            <person name="Waterston R."/>
            <person name="Wilson R.K."/>
        </authorList>
    </citation>
    <scope>NUCLEOTIDE SEQUENCE [LARGE SCALE GENOMIC DNA]</scope>
    <source>
        <strain>LT2 / SGSC1412 / ATCC 700720</strain>
    </source>
</reference>
<comment type="function">
    <text evidence="1">Removes maltotriose and maltotetraose chains that are attached by 1,6-alpha-linkage to the limit dextrin main chain, generating a debranched limit dextrin.</text>
</comment>
<comment type="catalytic activity">
    <reaction evidence="1">
        <text>Hydrolysis of (1-&gt;6)-alpha-D-glucosidic linkages to branches with degrees of polymerization of three or four glucose residues in limit dextrin.</text>
        <dbReference type="EC" id="3.2.1.196"/>
    </reaction>
</comment>
<comment type="pathway">
    <text evidence="1">Glycan degradation; glycogen degradation.</text>
</comment>
<comment type="similarity">
    <text evidence="1">Belongs to the glycosyl hydrolase 13 family.</text>
</comment>
<dbReference type="EC" id="3.2.1.196" evidence="1"/>
<dbReference type="EMBL" id="AE006468">
    <property type="protein sequence ID" value="AAL22397.1"/>
    <property type="molecule type" value="Genomic_DNA"/>
</dbReference>
<dbReference type="RefSeq" id="NP_462438.1">
    <property type="nucleotide sequence ID" value="NC_003197.2"/>
</dbReference>
<dbReference type="RefSeq" id="WP_000192491.1">
    <property type="nucleotide sequence ID" value="NC_003197.2"/>
</dbReference>
<dbReference type="SMR" id="Q8ZLG6"/>
<dbReference type="STRING" id="99287.STM3537"/>
<dbReference type="CAZy" id="CBM48">
    <property type="family name" value="Carbohydrate-Binding Module Family 48"/>
</dbReference>
<dbReference type="CAZy" id="GH13">
    <property type="family name" value="Glycoside Hydrolase Family 13"/>
</dbReference>
<dbReference type="PaxDb" id="99287-STM3537"/>
<dbReference type="GeneID" id="1255060"/>
<dbReference type="KEGG" id="stm:STM3537"/>
<dbReference type="PATRIC" id="fig|99287.12.peg.3739"/>
<dbReference type="HOGENOM" id="CLU_011725_1_1_6"/>
<dbReference type="OMA" id="ADYTGCG"/>
<dbReference type="PhylomeDB" id="Q8ZLG6"/>
<dbReference type="BioCyc" id="SENT99287:STM3537-MONOMER"/>
<dbReference type="UniPathway" id="UPA00165"/>
<dbReference type="Proteomes" id="UP000001014">
    <property type="component" value="Chromosome"/>
</dbReference>
<dbReference type="GO" id="GO:0004133">
    <property type="term" value="F:glycogen debranching enzyme activity"/>
    <property type="evidence" value="ECO:0007669"/>
    <property type="project" value="UniProtKB-UniRule"/>
</dbReference>
<dbReference type="GO" id="GO:0004553">
    <property type="term" value="F:hydrolase activity, hydrolyzing O-glycosyl compounds"/>
    <property type="evidence" value="ECO:0007669"/>
    <property type="project" value="InterPro"/>
</dbReference>
<dbReference type="GO" id="GO:0005980">
    <property type="term" value="P:glycogen catabolic process"/>
    <property type="evidence" value="ECO:0007669"/>
    <property type="project" value="UniProtKB-UniRule"/>
</dbReference>
<dbReference type="CDD" id="cd11326">
    <property type="entry name" value="AmyAc_Glg_debranch"/>
    <property type="match status" value="1"/>
</dbReference>
<dbReference type="CDD" id="cd02856">
    <property type="entry name" value="E_set_GDE_Isoamylase_N"/>
    <property type="match status" value="1"/>
</dbReference>
<dbReference type="FunFam" id="2.60.40.10:FF:000468">
    <property type="entry name" value="Glycogen debranching enzyme"/>
    <property type="match status" value="1"/>
</dbReference>
<dbReference type="Gene3D" id="3.20.20.80">
    <property type="entry name" value="Glycosidases"/>
    <property type="match status" value="1"/>
</dbReference>
<dbReference type="Gene3D" id="2.60.40.1180">
    <property type="entry name" value="Golgi alpha-mannosidase II"/>
    <property type="match status" value="1"/>
</dbReference>
<dbReference type="Gene3D" id="2.60.40.10">
    <property type="entry name" value="Immunoglobulins"/>
    <property type="match status" value="1"/>
</dbReference>
<dbReference type="HAMAP" id="MF_01248">
    <property type="entry name" value="GlgX"/>
    <property type="match status" value="1"/>
</dbReference>
<dbReference type="InterPro" id="IPR040784">
    <property type="entry name" value="GlgX_C"/>
</dbReference>
<dbReference type="InterPro" id="IPR044505">
    <property type="entry name" value="GlgX_Isoamylase_N_E_set"/>
</dbReference>
<dbReference type="InterPro" id="IPR006047">
    <property type="entry name" value="Glyco_hydro_13_cat_dom"/>
</dbReference>
<dbReference type="InterPro" id="IPR004193">
    <property type="entry name" value="Glyco_hydro_13_N"/>
</dbReference>
<dbReference type="InterPro" id="IPR013780">
    <property type="entry name" value="Glyco_hydro_b"/>
</dbReference>
<dbReference type="InterPro" id="IPR022844">
    <property type="entry name" value="Glycogen_debranch_bac"/>
</dbReference>
<dbReference type="InterPro" id="IPR011837">
    <property type="entry name" value="Glycogen_debranch_GlgX"/>
</dbReference>
<dbReference type="InterPro" id="IPR017853">
    <property type="entry name" value="Glycoside_hydrolase_SF"/>
</dbReference>
<dbReference type="InterPro" id="IPR013783">
    <property type="entry name" value="Ig-like_fold"/>
</dbReference>
<dbReference type="InterPro" id="IPR014756">
    <property type="entry name" value="Ig_E-set"/>
</dbReference>
<dbReference type="NCBIfam" id="TIGR02100">
    <property type="entry name" value="glgX_debranch"/>
    <property type="match status" value="1"/>
</dbReference>
<dbReference type="NCBIfam" id="NF002983">
    <property type="entry name" value="PRK03705.1"/>
    <property type="match status" value="1"/>
</dbReference>
<dbReference type="PANTHER" id="PTHR43002">
    <property type="entry name" value="GLYCOGEN DEBRANCHING ENZYME"/>
    <property type="match status" value="1"/>
</dbReference>
<dbReference type="Pfam" id="PF00128">
    <property type="entry name" value="Alpha-amylase"/>
    <property type="match status" value="1"/>
</dbReference>
<dbReference type="Pfam" id="PF02922">
    <property type="entry name" value="CBM_48"/>
    <property type="match status" value="1"/>
</dbReference>
<dbReference type="Pfam" id="PF18390">
    <property type="entry name" value="GlgX_C"/>
    <property type="match status" value="1"/>
</dbReference>
<dbReference type="SMART" id="SM00642">
    <property type="entry name" value="Aamy"/>
    <property type="match status" value="1"/>
</dbReference>
<dbReference type="SUPFAM" id="SSF51445">
    <property type="entry name" value="(Trans)glycosidases"/>
    <property type="match status" value="1"/>
</dbReference>
<dbReference type="SUPFAM" id="SSF81296">
    <property type="entry name" value="E set domains"/>
    <property type="match status" value="1"/>
</dbReference>
<sequence>MTQLAIGEATPHGATYDGHGVNFTLFSAHAERVELCVFDSRGNERRYDLPGRRGDVWHGYLAGARPGLRYGYRVHGPWQPAQGHRFNPAKLLLDPYARRVEGELKDHPLLHGGHDEPDYRDNAAVAPKSVVISDHYDWEDDAAPRTPWGKTVIYEAHVKGLTYLHPELPQEIRGTYKALGHPVMVAYFKQLGITALELLPVAQFASEPRLQRMGLTNYWGYNPMAMFALHPAWASSPETALDEFRDAVKALHRAGIEVILDIVLNHSAELDLDGPTFSLRGIDNRSYYWIRDDGDYHNWTGCGNTLNLSHPGVVEYACECLRYWVETCHVDGFRFDLASVMGRTPTFRQDAPLFAAIKACPVLSTVKLIAEPWDIGEGGYQVGNFPPPFAEWNDHFRDAARRFWLPRNLTTGEFACRFAASSDVFKRNGRAPGASVNLLTAHDGFTLRDCVCFNQKHNEANGEENRDGTNSNYSDNHGKEGLGGPLDLMERRRDSIHALLATLLLSQGTPMLLAGDEHGHSQHGNNNAYCQDNALTWLDWQQANRGLTTFTAALIRLRQQIPALTGNSWWEEGDGNVRWLNKNAQPLSADEWQNGPKLMQILLSDRFLIAINATLEVTDIVLPEGEWRAVPPFAGEDNPVITAVWQGPAHGLCVFQRG</sequence>